<dbReference type="EMBL" id="CR555306">
    <property type="protein sequence ID" value="CAI06689.1"/>
    <property type="molecule type" value="Genomic_DNA"/>
</dbReference>
<dbReference type="RefSeq" id="WP_011236419.1">
    <property type="nucleotide sequence ID" value="NC_006513.1"/>
</dbReference>
<dbReference type="SMR" id="Q5P7M2"/>
<dbReference type="STRING" id="76114.ebA1073"/>
<dbReference type="KEGG" id="eba:ebA1073"/>
<dbReference type="eggNOG" id="COG0218">
    <property type="taxonomic scope" value="Bacteria"/>
</dbReference>
<dbReference type="HOGENOM" id="CLU_033732_1_0_4"/>
<dbReference type="OrthoDB" id="9804921at2"/>
<dbReference type="Proteomes" id="UP000006552">
    <property type="component" value="Chromosome"/>
</dbReference>
<dbReference type="GO" id="GO:0005829">
    <property type="term" value="C:cytosol"/>
    <property type="evidence" value="ECO:0007669"/>
    <property type="project" value="TreeGrafter"/>
</dbReference>
<dbReference type="GO" id="GO:0005525">
    <property type="term" value="F:GTP binding"/>
    <property type="evidence" value="ECO:0007669"/>
    <property type="project" value="UniProtKB-UniRule"/>
</dbReference>
<dbReference type="GO" id="GO:0046872">
    <property type="term" value="F:metal ion binding"/>
    <property type="evidence" value="ECO:0007669"/>
    <property type="project" value="UniProtKB-KW"/>
</dbReference>
<dbReference type="GO" id="GO:0000917">
    <property type="term" value="P:division septum assembly"/>
    <property type="evidence" value="ECO:0007669"/>
    <property type="project" value="UniProtKB-KW"/>
</dbReference>
<dbReference type="CDD" id="cd01876">
    <property type="entry name" value="YihA_EngB"/>
    <property type="match status" value="1"/>
</dbReference>
<dbReference type="FunFam" id="3.40.50.300:FF:000098">
    <property type="entry name" value="Probable GTP-binding protein EngB"/>
    <property type="match status" value="1"/>
</dbReference>
<dbReference type="Gene3D" id="3.40.50.300">
    <property type="entry name" value="P-loop containing nucleotide triphosphate hydrolases"/>
    <property type="match status" value="1"/>
</dbReference>
<dbReference type="HAMAP" id="MF_00321">
    <property type="entry name" value="GTPase_EngB"/>
    <property type="match status" value="1"/>
</dbReference>
<dbReference type="InterPro" id="IPR030393">
    <property type="entry name" value="G_ENGB_dom"/>
</dbReference>
<dbReference type="InterPro" id="IPR006073">
    <property type="entry name" value="GTP-bd"/>
</dbReference>
<dbReference type="InterPro" id="IPR019987">
    <property type="entry name" value="GTP-bd_ribosome_bio_YsxC"/>
</dbReference>
<dbReference type="InterPro" id="IPR027417">
    <property type="entry name" value="P-loop_NTPase"/>
</dbReference>
<dbReference type="NCBIfam" id="TIGR03598">
    <property type="entry name" value="GTPase_YsxC"/>
    <property type="match status" value="1"/>
</dbReference>
<dbReference type="PANTHER" id="PTHR11649:SF13">
    <property type="entry name" value="ENGB-TYPE G DOMAIN-CONTAINING PROTEIN"/>
    <property type="match status" value="1"/>
</dbReference>
<dbReference type="PANTHER" id="PTHR11649">
    <property type="entry name" value="MSS1/TRME-RELATED GTP-BINDING PROTEIN"/>
    <property type="match status" value="1"/>
</dbReference>
<dbReference type="Pfam" id="PF01926">
    <property type="entry name" value="MMR_HSR1"/>
    <property type="match status" value="1"/>
</dbReference>
<dbReference type="SUPFAM" id="SSF52540">
    <property type="entry name" value="P-loop containing nucleoside triphosphate hydrolases"/>
    <property type="match status" value="1"/>
</dbReference>
<dbReference type="PROSITE" id="PS51706">
    <property type="entry name" value="G_ENGB"/>
    <property type="match status" value="1"/>
</dbReference>
<sequence length="216" mass="23679">MPIFRNARFEVSIAKSGALPPPEGAEIAFAGRSNAGKSSAINTLADHTRLAFVSKTPGRTQLINFFRLDCGAVLVDLPGYGYAKVPENIRRQWQGLLEHYLRKRENLIGLVLIMDSRHPLTPLDRQMIDWFVPGGRPIHVLLTKCDKLSRNEAAATLASVRREVAALGPQISVQLFSSLKKIGMEEVEHKVAGWLGLPSDDLPAIPTPAQLRAAGK</sequence>
<accession>Q5P7M2</accession>
<gene>
    <name evidence="1" type="primary">engB</name>
    <name type="ordered locus">AZOSEA05670</name>
    <name type="ORF">ebA1073</name>
</gene>
<name>ENGB_AROAE</name>
<reference key="1">
    <citation type="journal article" date="2005" name="Arch. Microbiol.">
        <title>The genome sequence of an anaerobic aromatic-degrading denitrifying bacterium, strain EbN1.</title>
        <authorList>
            <person name="Rabus R."/>
            <person name="Kube M."/>
            <person name="Heider J."/>
            <person name="Beck A."/>
            <person name="Heitmann K."/>
            <person name="Widdel F."/>
            <person name="Reinhardt R."/>
        </authorList>
    </citation>
    <scope>NUCLEOTIDE SEQUENCE [LARGE SCALE GENOMIC DNA]</scope>
    <source>
        <strain>DSM 19018 / LMG 30748 / EbN1</strain>
    </source>
</reference>
<comment type="function">
    <text evidence="1">Necessary for normal cell division and for the maintenance of normal septation.</text>
</comment>
<comment type="cofactor">
    <cofactor evidence="1">
        <name>Mg(2+)</name>
        <dbReference type="ChEBI" id="CHEBI:18420"/>
    </cofactor>
</comment>
<comment type="similarity">
    <text evidence="1">Belongs to the TRAFAC class TrmE-Era-EngA-EngB-Septin-like GTPase superfamily. EngB GTPase family.</text>
</comment>
<keyword id="KW-0131">Cell cycle</keyword>
<keyword id="KW-0132">Cell division</keyword>
<keyword id="KW-0342">GTP-binding</keyword>
<keyword id="KW-0460">Magnesium</keyword>
<keyword id="KW-0479">Metal-binding</keyword>
<keyword id="KW-0547">Nucleotide-binding</keyword>
<keyword id="KW-1185">Reference proteome</keyword>
<keyword id="KW-0717">Septation</keyword>
<evidence type="ECO:0000255" key="1">
    <source>
        <dbReference type="HAMAP-Rule" id="MF_00321"/>
    </source>
</evidence>
<organism>
    <name type="scientific">Aromatoleum aromaticum (strain DSM 19018 / LMG 30748 / EbN1)</name>
    <name type="common">Azoarcus sp. (strain EbN1)</name>
    <dbReference type="NCBI Taxonomy" id="76114"/>
    <lineage>
        <taxon>Bacteria</taxon>
        <taxon>Pseudomonadati</taxon>
        <taxon>Pseudomonadota</taxon>
        <taxon>Betaproteobacteria</taxon>
        <taxon>Rhodocyclales</taxon>
        <taxon>Rhodocyclaceae</taxon>
        <taxon>Aromatoleum</taxon>
    </lineage>
</organism>
<feature type="chain" id="PRO_0000266810" description="Probable GTP-binding protein EngB">
    <location>
        <begin position="1"/>
        <end position="216"/>
    </location>
</feature>
<feature type="domain" description="EngB-type G" evidence="1">
    <location>
        <begin position="23"/>
        <end position="197"/>
    </location>
</feature>
<feature type="binding site" evidence="1">
    <location>
        <begin position="31"/>
        <end position="38"/>
    </location>
    <ligand>
        <name>GTP</name>
        <dbReference type="ChEBI" id="CHEBI:37565"/>
    </ligand>
</feature>
<feature type="binding site" evidence="1">
    <location>
        <position position="38"/>
    </location>
    <ligand>
        <name>Mg(2+)</name>
        <dbReference type="ChEBI" id="CHEBI:18420"/>
    </ligand>
</feature>
<feature type="binding site" evidence="1">
    <location>
        <begin position="58"/>
        <end position="62"/>
    </location>
    <ligand>
        <name>GTP</name>
        <dbReference type="ChEBI" id="CHEBI:37565"/>
    </ligand>
</feature>
<feature type="binding site" evidence="1">
    <location>
        <position position="60"/>
    </location>
    <ligand>
        <name>Mg(2+)</name>
        <dbReference type="ChEBI" id="CHEBI:18420"/>
    </ligand>
</feature>
<feature type="binding site" evidence="1">
    <location>
        <begin position="76"/>
        <end position="79"/>
    </location>
    <ligand>
        <name>GTP</name>
        <dbReference type="ChEBI" id="CHEBI:37565"/>
    </ligand>
</feature>
<feature type="binding site" evidence="1">
    <location>
        <begin position="143"/>
        <end position="146"/>
    </location>
    <ligand>
        <name>GTP</name>
        <dbReference type="ChEBI" id="CHEBI:37565"/>
    </ligand>
</feature>
<feature type="binding site" evidence="1">
    <location>
        <begin position="176"/>
        <end position="178"/>
    </location>
    <ligand>
        <name>GTP</name>
        <dbReference type="ChEBI" id="CHEBI:37565"/>
    </ligand>
</feature>
<protein>
    <recommendedName>
        <fullName evidence="1">Probable GTP-binding protein EngB</fullName>
    </recommendedName>
</protein>
<proteinExistence type="inferred from homology"/>